<comment type="subcellular location">
    <subcellularLocation>
        <location evidence="1">Cell membrane</location>
        <topology evidence="1">Multi-pass membrane protein</topology>
    </subcellularLocation>
</comment>
<comment type="similarity">
    <text evidence="1">Belongs to the UPF0391 family.</text>
</comment>
<sequence length="54" mass="5809">MLYYALVFLVVALIAGVLGFGGIAGASASIAQVLFFIFLVLFVVSLVMRLMRKV</sequence>
<evidence type="ECO:0000255" key="1">
    <source>
        <dbReference type="HAMAP-Rule" id="MF_01361"/>
    </source>
</evidence>
<dbReference type="EMBL" id="AM236083">
    <property type="protein sequence ID" value="CAK03777.1"/>
    <property type="molecule type" value="Genomic_DNA"/>
</dbReference>
<dbReference type="RefSeq" id="WP_003549551.1">
    <property type="nucleotide sequence ID" value="NC_008379.1"/>
</dbReference>
<dbReference type="SMR" id="Q1M8M5"/>
<dbReference type="EnsemblBacteria" id="CAK03777">
    <property type="protein sequence ID" value="CAK03777"/>
    <property type="gene ID" value="pRL90066"/>
</dbReference>
<dbReference type="KEGG" id="rle:pRL90066"/>
<dbReference type="HOGENOM" id="CLU_187346_2_1_5"/>
<dbReference type="Proteomes" id="UP000006575">
    <property type="component" value="Plasmid pRL9"/>
</dbReference>
<dbReference type="GO" id="GO:0005886">
    <property type="term" value="C:plasma membrane"/>
    <property type="evidence" value="ECO:0007669"/>
    <property type="project" value="UniProtKB-SubCell"/>
</dbReference>
<dbReference type="HAMAP" id="MF_01361">
    <property type="entry name" value="UPF0391"/>
    <property type="match status" value="1"/>
</dbReference>
<dbReference type="InterPro" id="IPR009760">
    <property type="entry name" value="DUF1328"/>
</dbReference>
<dbReference type="NCBIfam" id="NF010226">
    <property type="entry name" value="PRK13682.1-1"/>
    <property type="match status" value="1"/>
</dbReference>
<dbReference type="NCBIfam" id="NF010228">
    <property type="entry name" value="PRK13682.1-3"/>
    <property type="match status" value="1"/>
</dbReference>
<dbReference type="NCBIfam" id="NF010229">
    <property type="entry name" value="PRK13682.1-4"/>
    <property type="match status" value="1"/>
</dbReference>
<dbReference type="Pfam" id="PF07043">
    <property type="entry name" value="DUF1328"/>
    <property type="match status" value="1"/>
</dbReference>
<dbReference type="PIRSF" id="PIRSF036466">
    <property type="entry name" value="UCP036466"/>
    <property type="match status" value="1"/>
</dbReference>
<accession>Q1M8M5</accession>
<feature type="chain" id="PRO_0000256770" description="UPF0391 membrane protein pRL90066">
    <location>
        <begin position="1"/>
        <end position="54"/>
    </location>
</feature>
<feature type="transmembrane region" description="Helical" evidence="1">
    <location>
        <begin position="5"/>
        <end position="25"/>
    </location>
</feature>
<feature type="transmembrane region" description="Helical" evidence="1">
    <location>
        <begin position="28"/>
        <end position="48"/>
    </location>
</feature>
<reference key="1">
    <citation type="journal article" date="2006" name="Genome Biol.">
        <title>The genome of Rhizobium leguminosarum has recognizable core and accessory components.</title>
        <authorList>
            <person name="Young J.P.W."/>
            <person name="Crossman L.C."/>
            <person name="Johnston A.W.B."/>
            <person name="Thomson N.R."/>
            <person name="Ghazoui Z.F."/>
            <person name="Hull K.H."/>
            <person name="Wexler M."/>
            <person name="Curson A.R.J."/>
            <person name="Todd J.D."/>
            <person name="Poole P.S."/>
            <person name="Mauchline T.H."/>
            <person name="East A.K."/>
            <person name="Quail M.A."/>
            <person name="Churcher C."/>
            <person name="Arrowsmith C."/>
            <person name="Cherevach I."/>
            <person name="Chillingworth T."/>
            <person name="Clarke K."/>
            <person name="Cronin A."/>
            <person name="Davis P."/>
            <person name="Fraser A."/>
            <person name="Hance Z."/>
            <person name="Hauser H."/>
            <person name="Jagels K."/>
            <person name="Moule S."/>
            <person name="Mungall K."/>
            <person name="Norbertczak H."/>
            <person name="Rabbinowitsch E."/>
            <person name="Sanders M."/>
            <person name="Simmonds M."/>
            <person name="Whitehead S."/>
            <person name="Parkhill J."/>
        </authorList>
    </citation>
    <scope>NUCLEOTIDE SEQUENCE [LARGE SCALE GENOMIC DNA]</scope>
    <source>
        <strain>DSM 114642 / LMG 32736 / 3841</strain>
    </source>
</reference>
<organism>
    <name type="scientific">Rhizobium johnstonii (strain DSM 114642 / LMG 32736 / 3841)</name>
    <name type="common">Rhizobium leguminosarum bv. viciae</name>
    <dbReference type="NCBI Taxonomy" id="216596"/>
    <lineage>
        <taxon>Bacteria</taxon>
        <taxon>Pseudomonadati</taxon>
        <taxon>Pseudomonadota</taxon>
        <taxon>Alphaproteobacteria</taxon>
        <taxon>Hyphomicrobiales</taxon>
        <taxon>Rhizobiaceae</taxon>
        <taxon>Rhizobium/Agrobacterium group</taxon>
        <taxon>Rhizobium</taxon>
        <taxon>Rhizobium johnstonii</taxon>
    </lineage>
</organism>
<gene>
    <name type="ordered locus">pRL90066</name>
</gene>
<keyword id="KW-1003">Cell membrane</keyword>
<keyword id="KW-0472">Membrane</keyword>
<keyword id="KW-0614">Plasmid</keyword>
<keyword id="KW-0812">Transmembrane</keyword>
<keyword id="KW-1133">Transmembrane helix</keyword>
<geneLocation type="plasmid">
    <name>pRL9</name>
</geneLocation>
<proteinExistence type="inferred from homology"/>
<name>Y4916_RHIJ3</name>
<protein>
    <recommendedName>
        <fullName evidence="1">UPF0391 membrane protein pRL90066</fullName>
    </recommendedName>
</protein>